<reference key="1">
    <citation type="journal article" date="2002" name="Mol. Biol. Evol.">
        <title>The plastid chromosome of Atropa belladonna and its comparison with that of Nicotiana tabacum: the role of RNA editing in generating divergence in the process of plant speciation.</title>
        <authorList>
            <person name="Schmitz-Linneweber C."/>
            <person name="Regel R."/>
            <person name="Du T.G."/>
            <person name="Hupfer H."/>
            <person name="Herrmann R.G."/>
            <person name="Maier R.M."/>
        </authorList>
    </citation>
    <scope>NUCLEOTIDE SEQUENCE [LARGE SCALE GENOMIC DNA]</scope>
    <source>
        <strain>cv. Ab5p(kan)</strain>
    </source>
</reference>
<dbReference type="EC" id="2.7.7.6" evidence="1"/>
<dbReference type="EMBL" id="AJ316582">
    <property type="protein sequence ID" value="CAC88034.1"/>
    <property type="molecule type" value="Genomic_DNA"/>
</dbReference>
<dbReference type="RefSeq" id="NP_783222.2">
    <property type="nucleotide sequence ID" value="NC_004561.1"/>
</dbReference>
<dbReference type="SMR" id="Q8S8Y1"/>
<dbReference type="GeneID" id="806554"/>
<dbReference type="GO" id="GO:0009507">
    <property type="term" value="C:chloroplast"/>
    <property type="evidence" value="ECO:0007669"/>
    <property type="project" value="UniProtKB-SubCell"/>
</dbReference>
<dbReference type="GO" id="GO:0000428">
    <property type="term" value="C:DNA-directed RNA polymerase complex"/>
    <property type="evidence" value="ECO:0007669"/>
    <property type="project" value="UniProtKB-KW"/>
</dbReference>
<dbReference type="GO" id="GO:0005739">
    <property type="term" value="C:mitochondrion"/>
    <property type="evidence" value="ECO:0007669"/>
    <property type="project" value="GOC"/>
</dbReference>
<dbReference type="GO" id="GO:0003677">
    <property type="term" value="F:DNA binding"/>
    <property type="evidence" value="ECO:0007669"/>
    <property type="project" value="UniProtKB-UniRule"/>
</dbReference>
<dbReference type="GO" id="GO:0003899">
    <property type="term" value="F:DNA-directed RNA polymerase activity"/>
    <property type="evidence" value="ECO:0007669"/>
    <property type="project" value="UniProtKB-UniRule"/>
</dbReference>
<dbReference type="GO" id="GO:0008270">
    <property type="term" value="F:zinc ion binding"/>
    <property type="evidence" value="ECO:0007669"/>
    <property type="project" value="UniProtKB-UniRule"/>
</dbReference>
<dbReference type="GO" id="GO:0006351">
    <property type="term" value="P:DNA-templated transcription"/>
    <property type="evidence" value="ECO:0007669"/>
    <property type="project" value="UniProtKB-UniRule"/>
</dbReference>
<dbReference type="CDD" id="cd02655">
    <property type="entry name" value="RNAP_beta'_C"/>
    <property type="match status" value="1"/>
</dbReference>
<dbReference type="FunFam" id="1.10.132.30:FF:000002">
    <property type="entry name" value="DNA-directed RNA polymerase subunit beta"/>
    <property type="match status" value="1"/>
</dbReference>
<dbReference type="FunFam" id="1.10.1790.20:FF:000002">
    <property type="entry name" value="DNA-directed RNA polymerase subunit beta"/>
    <property type="match status" value="1"/>
</dbReference>
<dbReference type="Gene3D" id="1.10.132.30">
    <property type="match status" value="1"/>
</dbReference>
<dbReference type="Gene3D" id="1.10.150.390">
    <property type="match status" value="1"/>
</dbReference>
<dbReference type="Gene3D" id="1.10.1790.20">
    <property type="match status" value="1"/>
</dbReference>
<dbReference type="Gene3D" id="1.10.274.100">
    <property type="entry name" value="RNA polymerase Rpb1, domain 3"/>
    <property type="match status" value="1"/>
</dbReference>
<dbReference type="HAMAP" id="MF_01324">
    <property type="entry name" value="RNApol_bact_RpoC2"/>
    <property type="match status" value="1"/>
</dbReference>
<dbReference type="InterPro" id="IPR012756">
    <property type="entry name" value="DNA-dir_RpoC2_beta_pp"/>
</dbReference>
<dbReference type="InterPro" id="IPR050254">
    <property type="entry name" value="RNA_pol_beta''_euk"/>
</dbReference>
<dbReference type="InterPro" id="IPR042102">
    <property type="entry name" value="RNA_pol_Rpb1_3_sf"/>
</dbReference>
<dbReference type="InterPro" id="IPR007083">
    <property type="entry name" value="RNA_pol_Rpb1_4"/>
</dbReference>
<dbReference type="InterPro" id="IPR007081">
    <property type="entry name" value="RNA_pol_Rpb1_5"/>
</dbReference>
<dbReference type="InterPro" id="IPR038120">
    <property type="entry name" value="Rpb1_funnel_sf"/>
</dbReference>
<dbReference type="NCBIfam" id="TIGR02388">
    <property type="entry name" value="rpoC2_cyan"/>
    <property type="match status" value="1"/>
</dbReference>
<dbReference type="PANTHER" id="PTHR34995">
    <property type="entry name" value="DNA-DIRECTED RNA POLYMERASE SUBUNIT BETA"/>
    <property type="match status" value="1"/>
</dbReference>
<dbReference type="PANTHER" id="PTHR34995:SF1">
    <property type="entry name" value="DNA-DIRECTED RNA POLYMERASE SUBUNIT BETA"/>
    <property type="match status" value="1"/>
</dbReference>
<dbReference type="Pfam" id="PF05000">
    <property type="entry name" value="RNA_pol_Rpb1_4"/>
    <property type="match status" value="1"/>
</dbReference>
<dbReference type="Pfam" id="PF04998">
    <property type="entry name" value="RNA_pol_Rpb1_5"/>
    <property type="match status" value="2"/>
</dbReference>
<dbReference type="SUPFAM" id="SSF64484">
    <property type="entry name" value="beta and beta-prime subunits of DNA dependent RNA-polymerase"/>
    <property type="match status" value="1"/>
</dbReference>
<name>RPOC2_ATRBE</name>
<sequence>MEVLMAERANLVFHNKAIDGTAMKRLISRLIEHFGMAYTSHILDQVKTLGFQQATATSISLGIDDLLTIPSKGWLVQDAEQQSLILEKHHHYGNVHAVEKLRQSIEIWYATSEYLRQEMNPNFRMTDPFNPVHIMSFSGARGNASQVHQLVGMRGLMSDPQGQMIDLPIQSNLREGLSLTEYIISCYGARKGVVDTAVRTSDAGYLTRRLVEVVQHIVVRRTDCGTARGISVSPRNGMMPERIFSQTLIGRVLADDIYMGPRCIATRNQDIGIGLVNRFITFRAQPISIRTPFTCRSTSWICRLCYGRSPTHGDLVELGEAVGIIAGQSIGEPGTQLTLRTFHTGGVFTGGTAEHVRAPSNGKIKFNEDLVHPTRTRHGHPAFLCSIDLYVTIESEDILHNVNIPPKSLLLVQNDQYVESEQVIAEIRAGISTLNFKEKVRKHIYSDSDGEMHWSTDVYHAPEFTYGNVHLLPKTSHLWILLGGPCKSSLVYLSIHKDQDQMNAHSLSGKQRYTSNLSVTNDQARQKLFSSGFSGKKEDRIPDYSDLNRIICTGQYNLVYSPILHENSDLLSKRRRNKFIIPLHSIQELENELMPCSGISIEIPVNGIFRRNSILAYFDDPRYRRKSSGIIKYGTIETHSVIKKEDLIEYRGVKEFRPKYQMKVDRFFFIPEEVHILPGSSSIMVRNNSIVGVDTQITLNLRSRVGGLVRVERKKKRIELKIFSGDIHFPGETDKISRHTGLLIPPGTGKINSKESKKVKKWIYVQRITPSKKKFFVLVRPVVTYEITDGINFETLFPPDPLQERDNVQLRIVNYILYGNGKPIRGISDTSIQLVRTCLVLNWNQDKKSSSCEEARASFVEIRTNGLIRHFLRINLVKSPISYIGKRNDPSGSGLLSDNGSDCTNINPFSSIYSYSKAKIQQSLNQPQGTIHTLLNRNKECQSLIILSSANCSRMGTLKYHSVIKDSIKKDPLIPIRNSLGPLGTCLPIENFYSSYRLITHNQILVTNYLQLDNLKQTFQVIKFKYYLMDENGKIFNPDPCRNIILNPFNLNWYFLHHNYCEETSKIISLGQFICENVCIAKNGPPLKSGQVILVQVDSIVIRSAKPYLATPGATVHGHYGETLYEGDTLVTFIYEKSRSGDITQGLPKVEQVLEVRSIDSISMNLEKRVEGWNKCITRILGIPWGFLIGAELTIAQSRISLVNKIQQVYRSQGVQIHNRHIEIIVRQITSKVLVSEDGMSNVFSPGELIGLLRAERMGRALEEAICYRVVLLGITRASLNTQSFISEASFQETARVLAKAALRGRIDWLKGLKENVVLGGVIPVGTGFKGLVHPSKQHNNIPLETKKKNLFEGEMRDILFHHRKLFDSCLSKKFHDIPEQSFIGFNDS</sequence>
<proteinExistence type="inferred from homology"/>
<gene>
    <name evidence="1" type="primary">rpoC2</name>
</gene>
<accession>Q8S8Y1</accession>
<organism>
    <name type="scientific">Atropa belladonna</name>
    <name type="common">Belladonna</name>
    <name type="synonym">Deadly nightshade</name>
    <dbReference type="NCBI Taxonomy" id="33113"/>
    <lineage>
        <taxon>Eukaryota</taxon>
        <taxon>Viridiplantae</taxon>
        <taxon>Streptophyta</taxon>
        <taxon>Embryophyta</taxon>
        <taxon>Tracheophyta</taxon>
        <taxon>Spermatophyta</taxon>
        <taxon>Magnoliopsida</taxon>
        <taxon>eudicotyledons</taxon>
        <taxon>Gunneridae</taxon>
        <taxon>Pentapetalae</taxon>
        <taxon>asterids</taxon>
        <taxon>lamiids</taxon>
        <taxon>Solanales</taxon>
        <taxon>Solanaceae</taxon>
        <taxon>Solanoideae</taxon>
        <taxon>Hyoscyameae</taxon>
        <taxon>Atropa</taxon>
    </lineage>
</organism>
<keyword id="KW-0150">Chloroplast</keyword>
<keyword id="KW-0240">DNA-directed RNA polymerase</keyword>
<keyword id="KW-0479">Metal-binding</keyword>
<keyword id="KW-0548">Nucleotidyltransferase</keyword>
<keyword id="KW-0934">Plastid</keyword>
<keyword id="KW-0804">Transcription</keyword>
<keyword id="KW-0808">Transferase</keyword>
<keyword id="KW-0862">Zinc</keyword>
<geneLocation type="chloroplast"/>
<protein>
    <recommendedName>
        <fullName evidence="1">DNA-directed RNA polymerase subunit beta''</fullName>
        <ecNumber evidence="1">2.7.7.6</ecNumber>
    </recommendedName>
    <alternativeName>
        <fullName evidence="1">PEP</fullName>
    </alternativeName>
    <alternativeName>
        <fullName evidence="1">Plastid-encoded RNA polymerase subunit beta''</fullName>
        <shortName evidence="1">RNA polymerase subunit beta''</shortName>
    </alternativeName>
</protein>
<comment type="function">
    <text evidence="1">DNA-dependent RNA polymerase catalyzes the transcription of DNA into RNA using the four ribonucleoside triphosphates as substrates.</text>
</comment>
<comment type="catalytic activity">
    <reaction evidence="1">
        <text>RNA(n) + a ribonucleoside 5'-triphosphate = RNA(n+1) + diphosphate</text>
        <dbReference type="Rhea" id="RHEA:21248"/>
        <dbReference type="Rhea" id="RHEA-COMP:14527"/>
        <dbReference type="Rhea" id="RHEA-COMP:17342"/>
        <dbReference type="ChEBI" id="CHEBI:33019"/>
        <dbReference type="ChEBI" id="CHEBI:61557"/>
        <dbReference type="ChEBI" id="CHEBI:140395"/>
        <dbReference type="EC" id="2.7.7.6"/>
    </reaction>
</comment>
<comment type="cofactor">
    <cofactor evidence="1">
        <name>Zn(2+)</name>
        <dbReference type="ChEBI" id="CHEBI:29105"/>
    </cofactor>
    <text evidence="1">Binds 1 Zn(2+) ion per subunit.</text>
</comment>
<comment type="subunit">
    <text evidence="1">In plastids the minimal PEP RNA polymerase catalytic core is composed of four subunits: alpha, beta, beta', and beta''. When a (nuclear-encoded) sigma factor is associated with the core the holoenzyme is formed, which can initiate transcription.</text>
</comment>
<comment type="subcellular location">
    <subcellularLocation>
        <location evidence="1">Plastid</location>
        <location evidence="1">Chloroplast</location>
    </subcellularLocation>
</comment>
<comment type="similarity">
    <text evidence="1">Belongs to the RNA polymerase beta' chain family. RpoC2 subfamily.</text>
</comment>
<feature type="chain" id="PRO_0000067916" description="DNA-directed RNA polymerase subunit beta''">
    <location>
        <begin position="1"/>
        <end position="1389"/>
    </location>
</feature>
<feature type="binding site" evidence="1">
    <location>
        <position position="224"/>
    </location>
    <ligand>
        <name>Zn(2+)</name>
        <dbReference type="ChEBI" id="CHEBI:29105"/>
    </ligand>
</feature>
<feature type="binding site" evidence="1">
    <location>
        <position position="295"/>
    </location>
    <ligand>
        <name>Zn(2+)</name>
        <dbReference type="ChEBI" id="CHEBI:29105"/>
    </ligand>
</feature>
<feature type="binding site" evidence="1">
    <location>
        <position position="302"/>
    </location>
    <ligand>
        <name>Zn(2+)</name>
        <dbReference type="ChEBI" id="CHEBI:29105"/>
    </ligand>
</feature>
<feature type="binding site" evidence="1">
    <location>
        <position position="305"/>
    </location>
    <ligand>
        <name>Zn(2+)</name>
        <dbReference type="ChEBI" id="CHEBI:29105"/>
    </ligand>
</feature>
<evidence type="ECO:0000255" key="1">
    <source>
        <dbReference type="HAMAP-Rule" id="MF_01324"/>
    </source>
</evidence>